<sequence>MAIPEEFDILVLGGGSSGSCIAGRLANLDHSLKVGLIEAGENNLNNPWVYLPGIYPRNMKLDSKTASFYTSNPSPHLNGRRAIVPCANILGGGSSINFMMYTRGSASDYDDFEAEGWKTKDLLPLMKKTETYQRACNNPEIHGFEGPIKVSFGNYTYPVCQDFLRATESQGIPYVDDLEDLVTAHGAEHWLKWINRDTGRRSDSAHAFVHSTMRNHDNLYLICNTKVDKIIVEDGRAAAVRTVPSKPLNAKKPTHKVYRARKQIVLSCGTISSPLVLQRSGFGDPIKLRAAGVKPLVNLPGVGRNFQDHYCFFSPYRIKPQYESFDDFVRGDANIQKKVFDQWYANGTGPLATNGIEAGVKIRPTPEELSQMDESFQEGYREYFEDKPDKPVMHYSIIAGFFGDHTKIPPGKYMTMFHFLEYPFSRGSIHITSPDPYATPDFDPGFMNDERDMAPMVWSYKKSRETARKMDHFAGEVTSHHPLFPYSSEARAYEMDLETSNAYGGPLNLTAGLAHGSWTQPLKKPAGRNEGHVTSNQVELHPDIEYDEEDDKAIENYIREHTETTWHCLGTCSIGPREGSKIVKWGGVLDHRSNVYGVKGLKVGDLSVCPDNVGCNTYTTALLIGEKTATLVGEDLGYTGEALDMTVPQFKLGTYEKTGLARF</sequence>
<name>ALOX2_KOMPG</name>
<feature type="initiator methionine" description="Removed" evidence="1">
    <location>
        <position position="1"/>
    </location>
</feature>
<feature type="chain" id="PRO_0000425714" description="Alcohol oxidase 2">
    <location>
        <begin position="2"/>
        <end position="663"/>
    </location>
</feature>
<feature type="short sequence motif" description="Microbody targeting signal" evidence="3">
    <location>
        <begin position="661"/>
        <end position="663"/>
    </location>
</feature>
<feature type="active site" description="Proton acceptor" evidence="2">
    <location>
        <position position="567"/>
    </location>
</feature>
<feature type="binding site" evidence="1">
    <location>
        <begin position="8"/>
        <end position="38"/>
    </location>
    <ligand>
        <name>FAD</name>
        <dbReference type="ChEBI" id="CHEBI:57692"/>
    </ligand>
</feature>
<reference key="1">
    <citation type="journal article" date="2009" name="Nat. Biotechnol.">
        <title>Genome sequence of the recombinant protein production host Pichia pastoris.</title>
        <authorList>
            <person name="De Schutter K."/>
            <person name="Lin Y.-C."/>
            <person name="Tiels P."/>
            <person name="Van Hecke A."/>
            <person name="Glinka S."/>
            <person name="Weber-Lehmann J."/>
            <person name="Rouze P."/>
            <person name="Van de Peer Y."/>
            <person name="Callewaert N."/>
        </authorList>
    </citation>
    <scope>NUCLEOTIDE SEQUENCE [LARGE SCALE GENOMIC DNA]</scope>
    <source>
        <strain>GS115 / ATCC 20864</strain>
    </source>
</reference>
<dbReference type="EC" id="1.1.3.13"/>
<dbReference type="EMBL" id="FN392322">
    <property type="protein sequence ID" value="CAY71377.1"/>
    <property type="molecule type" value="Genomic_DNA"/>
</dbReference>
<dbReference type="RefSeq" id="XP_002493556.1">
    <property type="nucleotide sequence ID" value="XM_002493511.1"/>
</dbReference>
<dbReference type="SMR" id="C4R702"/>
<dbReference type="STRING" id="644223.C4R702"/>
<dbReference type="CAZy" id="AA3">
    <property type="family name" value="Auxiliary Activities 3"/>
</dbReference>
<dbReference type="EnsemblFungi" id="CAY71377">
    <property type="protein sequence ID" value="CAY71377"/>
    <property type="gene ID" value="PAS_chr4_0152"/>
</dbReference>
<dbReference type="GeneID" id="8201062"/>
<dbReference type="KEGG" id="ppa:PAS_chr4_0152"/>
<dbReference type="eggNOG" id="KOG1238">
    <property type="taxonomic scope" value="Eukaryota"/>
</dbReference>
<dbReference type="HOGENOM" id="CLU_002865_5_1_1"/>
<dbReference type="InParanoid" id="C4R702"/>
<dbReference type="OMA" id="SHASEVW"/>
<dbReference type="OrthoDB" id="269227at2759"/>
<dbReference type="UniPathway" id="UPA00147"/>
<dbReference type="Proteomes" id="UP000000314">
    <property type="component" value="Chromosome 4"/>
</dbReference>
<dbReference type="GO" id="GO:0005782">
    <property type="term" value="C:peroxisomal matrix"/>
    <property type="evidence" value="ECO:0007669"/>
    <property type="project" value="UniProtKB-SubCell"/>
</dbReference>
<dbReference type="GO" id="GO:0047639">
    <property type="term" value="F:alcohol oxidase activity"/>
    <property type="evidence" value="ECO:0007669"/>
    <property type="project" value="UniProtKB-EC"/>
</dbReference>
<dbReference type="GO" id="GO:0050660">
    <property type="term" value="F:flavin adenine dinucleotide binding"/>
    <property type="evidence" value="ECO:0007669"/>
    <property type="project" value="InterPro"/>
</dbReference>
<dbReference type="GO" id="GO:0046188">
    <property type="term" value="P:methane catabolic process"/>
    <property type="evidence" value="ECO:0007669"/>
    <property type="project" value="UniProtKB-UniPathway"/>
</dbReference>
<dbReference type="GO" id="GO:0015945">
    <property type="term" value="P:methanol metabolic process"/>
    <property type="evidence" value="ECO:0007669"/>
    <property type="project" value="UniProtKB-KW"/>
</dbReference>
<dbReference type="Gene3D" id="3.50.50.60">
    <property type="entry name" value="FAD/NAD(P)-binding domain"/>
    <property type="match status" value="2"/>
</dbReference>
<dbReference type="Gene3D" id="3.30.560.10">
    <property type="entry name" value="Glucose Oxidase, domain 3"/>
    <property type="match status" value="1"/>
</dbReference>
<dbReference type="InterPro" id="IPR036188">
    <property type="entry name" value="FAD/NAD-bd_sf"/>
</dbReference>
<dbReference type="InterPro" id="IPR012132">
    <property type="entry name" value="GMC_OxRdtase"/>
</dbReference>
<dbReference type="InterPro" id="IPR000172">
    <property type="entry name" value="GMC_OxRdtase_N"/>
</dbReference>
<dbReference type="InterPro" id="IPR007867">
    <property type="entry name" value="GMC_OxRtase_C"/>
</dbReference>
<dbReference type="PANTHER" id="PTHR11552">
    <property type="entry name" value="GLUCOSE-METHANOL-CHOLINE GMC OXIDOREDUCTASE"/>
    <property type="match status" value="1"/>
</dbReference>
<dbReference type="PANTHER" id="PTHR11552:SF119">
    <property type="entry name" value="GLUCOSE-METHANOL-CHOLINE OXIDOREDUCTASE N-TERMINAL DOMAIN-CONTAINING PROTEIN"/>
    <property type="match status" value="1"/>
</dbReference>
<dbReference type="Pfam" id="PF05199">
    <property type="entry name" value="GMC_oxred_C"/>
    <property type="match status" value="1"/>
</dbReference>
<dbReference type="Pfam" id="PF00732">
    <property type="entry name" value="GMC_oxred_N"/>
    <property type="match status" value="1"/>
</dbReference>
<dbReference type="PIRSF" id="PIRSF000137">
    <property type="entry name" value="Alcohol_oxidase"/>
    <property type="match status" value="1"/>
</dbReference>
<dbReference type="SUPFAM" id="SSF54373">
    <property type="entry name" value="FAD-linked reductases, C-terminal domain"/>
    <property type="match status" value="1"/>
</dbReference>
<dbReference type="SUPFAM" id="SSF51905">
    <property type="entry name" value="FAD/NAD(P)-binding domain"/>
    <property type="match status" value="1"/>
</dbReference>
<dbReference type="PROSITE" id="PS00623">
    <property type="entry name" value="GMC_OXRED_1"/>
    <property type="match status" value="1"/>
</dbReference>
<proteinExistence type="inferred from homology"/>
<accession>C4R702</accession>
<evidence type="ECO:0000250" key="1"/>
<evidence type="ECO:0000250" key="2">
    <source>
        <dbReference type="UniProtKB" id="E4QP00"/>
    </source>
</evidence>
<evidence type="ECO:0000255" key="3"/>
<evidence type="ECO:0000305" key="4"/>
<keyword id="KW-0274">FAD</keyword>
<keyword id="KW-0285">Flavoprotein</keyword>
<keyword id="KW-0485">Methanol utilization</keyword>
<keyword id="KW-0560">Oxidoreductase</keyword>
<keyword id="KW-0576">Peroxisome</keyword>
<keyword id="KW-1185">Reference proteome</keyword>
<organism>
    <name type="scientific">Komagataella phaffii (strain GS115 / ATCC 20864)</name>
    <name type="common">Yeast</name>
    <name type="synonym">Pichia pastoris</name>
    <dbReference type="NCBI Taxonomy" id="644223"/>
    <lineage>
        <taxon>Eukaryota</taxon>
        <taxon>Fungi</taxon>
        <taxon>Dikarya</taxon>
        <taxon>Ascomycota</taxon>
        <taxon>Saccharomycotina</taxon>
        <taxon>Pichiomycetes</taxon>
        <taxon>Pichiales</taxon>
        <taxon>Pichiaceae</taxon>
        <taxon>Komagataella</taxon>
    </lineage>
</organism>
<gene>
    <name type="primary">AOX2</name>
    <name type="ordered locus">PAS_chr4_0152</name>
</gene>
<comment type="function">
    <text evidence="1">Minor isoform of alcohol oxidase, which catalyzes the oxidation of methanol to formaldehyde and hydrogen peroxide, the first step in the methanol utilization pathway of methylotrophic yeasts.</text>
</comment>
<comment type="catalytic activity">
    <reaction>
        <text>a primary alcohol + O2 = an aldehyde + H2O2</text>
        <dbReference type="Rhea" id="RHEA:19829"/>
        <dbReference type="ChEBI" id="CHEBI:15379"/>
        <dbReference type="ChEBI" id="CHEBI:15734"/>
        <dbReference type="ChEBI" id="CHEBI:16240"/>
        <dbReference type="ChEBI" id="CHEBI:17478"/>
        <dbReference type="EC" id="1.1.3.13"/>
    </reaction>
</comment>
<comment type="cofactor">
    <cofactor evidence="1">
        <name>FAD</name>
        <dbReference type="ChEBI" id="CHEBI:57692"/>
    </cofactor>
</comment>
<comment type="pathway">
    <text>Energy metabolism; methane degradation.</text>
</comment>
<comment type="subunit">
    <text evidence="1">Homooctamer.</text>
</comment>
<comment type="subcellular location">
    <subcellularLocation>
        <location evidence="1">Peroxisome matrix</location>
    </subcellularLocation>
</comment>
<comment type="induction">
    <text evidence="1">Induced by methanol. Subject to strong carbon catabolite repression (By similarity).</text>
</comment>
<comment type="domain">
    <text evidence="1">The C-terminal peroxisomal targeting signal (PTS) is essential for the efficient targeting and import of AOX into peroxisomes via the PTS1 pathway.</text>
</comment>
<comment type="similarity">
    <text evidence="4">Belongs to the GMC oxidoreductase family.</text>
</comment>
<protein>
    <recommendedName>
        <fullName>Alcohol oxidase 2</fullName>
        <shortName>AO 2</shortName>
        <shortName>AOX 2</shortName>
        <ecNumber>1.1.3.13</ecNumber>
    </recommendedName>
    <alternativeName>
        <fullName>Methanol oxidase 2</fullName>
        <shortName>MOX 2</shortName>
    </alternativeName>
</protein>